<feature type="chain" id="PRO_0000345005" description="Tubulin-specific chaperone D">
    <location>
        <begin position="1"/>
        <end position="1480"/>
    </location>
</feature>
<feature type="repeat" description="HEAT 1">
    <location>
        <begin position="482"/>
        <end position="520"/>
    </location>
</feature>
<feature type="repeat" description="HEAT 2">
    <location>
        <begin position="886"/>
        <end position="922"/>
    </location>
</feature>
<feature type="region of interest" description="Disordered" evidence="2">
    <location>
        <begin position="1"/>
        <end position="32"/>
    </location>
</feature>
<feature type="region of interest" description="Disordered" evidence="2">
    <location>
        <begin position="453"/>
        <end position="476"/>
    </location>
</feature>
<feature type="region of interest" description="Disordered" evidence="2">
    <location>
        <begin position="859"/>
        <end position="880"/>
    </location>
</feature>
<feature type="region of interest" description="Disordered" evidence="2">
    <location>
        <begin position="1437"/>
        <end position="1480"/>
    </location>
</feature>
<feature type="compositionally biased region" description="Low complexity" evidence="2">
    <location>
        <begin position="7"/>
        <end position="32"/>
    </location>
</feature>
<feature type="compositionally biased region" description="Low complexity" evidence="2">
    <location>
        <begin position="453"/>
        <end position="463"/>
    </location>
</feature>
<feature type="compositionally biased region" description="Acidic residues" evidence="2">
    <location>
        <begin position="464"/>
        <end position="476"/>
    </location>
</feature>
<feature type="compositionally biased region" description="Low complexity" evidence="2">
    <location>
        <begin position="1444"/>
        <end position="1468"/>
    </location>
</feature>
<feature type="compositionally biased region" description="Acidic residues" evidence="2">
    <location>
        <begin position="1469"/>
        <end position="1480"/>
    </location>
</feature>
<reference key="1">
    <citation type="journal article" date="2005" name="Nature">
        <title>The genome of the social amoeba Dictyostelium discoideum.</title>
        <authorList>
            <person name="Eichinger L."/>
            <person name="Pachebat J.A."/>
            <person name="Gloeckner G."/>
            <person name="Rajandream M.A."/>
            <person name="Sucgang R."/>
            <person name="Berriman M."/>
            <person name="Song J."/>
            <person name="Olsen R."/>
            <person name="Szafranski K."/>
            <person name="Xu Q."/>
            <person name="Tunggal B."/>
            <person name="Kummerfeld S."/>
            <person name="Madera M."/>
            <person name="Konfortov B.A."/>
            <person name="Rivero F."/>
            <person name="Bankier A.T."/>
            <person name="Lehmann R."/>
            <person name="Hamlin N."/>
            <person name="Davies R."/>
            <person name="Gaudet P."/>
            <person name="Fey P."/>
            <person name="Pilcher K."/>
            <person name="Chen G."/>
            <person name="Saunders D."/>
            <person name="Sodergren E.J."/>
            <person name="Davis P."/>
            <person name="Kerhornou A."/>
            <person name="Nie X."/>
            <person name="Hall N."/>
            <person name="Anjard C."/>
            <person name="Hemphill L."/>
            <person name="Bason N."/>
            <person name="Farbrother P."/>
            <person name="Desany B."/>
            <person name="Just E."/>
            <person name="Morio T."/>
            <person name="Rost R."/>
            <person name="Churcher C.M."/>
            <person name="Cooper J."/>
            <person name="Haydock S."/>
            <person name="van Driessche N."/>
            <person name="Cronin A."/>
            <person name="Goodhead I."/>
            <person name="Muzny D.M."/>
            <person name="Mourier T."/>
            <person name="Pain A."/>
            <person name="Lu M."/>
            <person name="Harper D."/>
            <person name="Lindsay R."/>
            <person name="Hauser H."/>
            <person name="James K.D."/>
            <person name="Quiles M."/>
            <person name="Madan Babu M."/>
            <person name="Saito T."/>
            <person name="Buchrieser C."/>
            <person name="Wardroper A."/>
            <person name="Felder M."/>
            <person name="Thangavelu M."/>
            <person name="Johnson D."/>
            <person name="Knights A."/>
            <person name="Loulseged H."/>
            <person name="Mungall K.L."/>
            <person name="Oliver K."/>
            <person name="Price C."/>
            <person name="Quail M.A."/>
            <person name="Urushihara H."/>
            <person name="Hernandez J."/>
            <person name="Rabbinowitsch E."/>
            <person name="Steffen D."/>
            <person name="Sanders M."/>
            <person name="Ma J."/>
            <person name="Kohara Y."/>
            <person name="Sharp S."/>
            <person name="Simmonds M.N."/>
            <person name="Spiegler S."/>
            <person name="Tivey A."/>
            <person name="Sugano S."/>
            <person name="White B."/>
            <person name="Walker D."/>
            <person name="Woodward J.R."/>
            <person name="Winckler T."/>
            <person name="Tanaka Y."/>
            <person name="Shaulsky G."/>
            <person name="Schleicher M."/>
            <person name="Weinstock G.M."/>
            <person name="Rosenthal A."/>
            <person name="Cox E.C."/>
            <person name="Chisholm R.L."/>
            <person name="Gibbs R.A."/>
            <person name="Loomis W.F."/>
            <person name="Platzer M."/>
            <person name="Kay R.R."/>
            <person name="Williams J.G."/>
            <person name="Dear P.H."/>
            <person name="Noegel A.A."/>
            <person name="Barrell B.G."/>
            <person name="Kuspa A."/>
        </authorList>
    </citation>
    <scope>NUCLEOTIDE SEQUENCE [LARGE SCALE GENOMIC DNA]</scope>
    <source>
        <strain>AX4</strain>
    </source>
</reference>
<sequence>MENSEDISLNSSEKSIESSVVNLEDQQQSQQQTQQQTCQKTFVQEAPELTILIDKLIQLKHSNKDELISNTTRIIYIIDQYLEQPTLLDIHLNDIIQPLINFIKSNYINNSNNNNTTTTTTTIMTETEIVIKKLSIKNSFRIIYVLSKVRGFKTIVKLFQHEAIDLLPVLDQLEISYHQWVNINKQRDRLNEISVSYSSGINLKNYIKPEEESEQEVVDENNNNINNNHNIDDEYNENIISWEEVYVLALWVSLLVIIPFKFSSLDSASSGTASAAGDGGDGDGDGQLKSISSRILKLGKLALSDVSKIRDSFSELLSKLLNRPDMKFEQKQFIKWCTNSIQLISNNNNNNNQNNSSNNNILLIIGIYSTLATMFKKGNRLDFLPIDMNLYEKIMEANKYLSLSGSERITKKIFLKLLQRIAIIMLPPVSASWRYQKIIKPLLLKGELIKQINNNNNNNNNENNNEEGEEEEEEIPEEIDEILEEIMKSLKDKDTIIRWTSAKAIGRIVNLLPKDMGDQVIGLVIDQMFEKNEFIDADPSAWHGGCLALAELARRGLLLPERLDVVVPLVIRALFFDIIKGTYSIGSHVRDSACYLCWALARTYHNSILSPYLLPICRNLVVVSLYDREINCRKSASAAFQEMVGRHQGLVPNGIEIVTSADFFTVGNKNNSFTSLTTFIGKFQIDYYPIVIKHLATIKIYNWDLEIRQLASKSIHLLTNINPNDIVSNYLPLIIPNTQSDLVHVKHGASLAISEILISLFENNNINLLSDNLKMMILMTIKNTKNEKLFKGKGGVLIRIGMCKIIYSICLVEFSLDKNLSEIKKPTESTSTNGNEDRAAALKLKIAMLKAKTASQINKPIITPPSSKSTTNNNNNNNNNNLNDNEIAFNIILGYLNENLNHPNEEVQKEASKAFELLFSKYISSNEKISLLLELIDSHCKTLKFDINRSARRGSSLLLGSLPFNSANLSYDLLSKVVNELILSIFQDDPKFKDIETRVNSISSLYKIGIYILNLIFKNQENEQKEEEDFKKSKNYNLFIKIWNCLGLATNDYSIDKRGDIGSWVRELSCKVLFDFIKFIITNQNSSTTTTTASTTDLSIENLINEKMITEFICKLFQLSGEKLDKIRDVACKIIHELLWIENPSSINNIPHKEELKKIIVKDQDVHFNWFRTEESLPLICKVLKFNCYLYPLLFGLFSSLGGTSKYLINDSIQSIKQYFSSFDNDEKERFEKIISFSKAILEITNNTTQRMIQPTFRSIYNLLSTHIFDFLIINNLNEQSIFETILFNCYQIIESNQDDIYLLLNSIELFSYFFIQFENNNNEYIKDYSLKALLLLLSNLKYPKVRKLASDQLKKSTRLFINNNGDDETPSLIKSLIFNTKWDDSVDLIIEPLKSLLLLLNQKHLLELLSENPTKKPIPLAPPITSIEELKDKIQNPHKQSDDNNNNNNGELINNNTENNNNNNFDDNLPEDSQDLMEI</sequence>
<accession>Q55G93</accession>
<keyword id="KW-0143">Chaperone</keyword>
<keyword id="KW-1185">Reference proteome</keyword>
<keyword id="KW-0677">Repeat</keyword>
<evidence type="ECO:0000250" key="1"/>
<evidence type="ECO:0000256" key="2">
    <source>
        <dbReference type="SAM" id="MobiDB-lite"/>
    </source>
</evidence>
<evidence type="ECO:0000305" key="3"/>
<gene>
    <name type="primary">tbcd</name>
    <name type="ORF">DDB_G0268516</name>
</gene>
<name>TBCD_DICDI</name>
<dbReference type="EMBL" id="AAFI02000003">
    <property type="protein sequence ID" value="EAL73711.2"/>
    <property type="molecule type" value="Genomic_DNA"/>
</dbReference>
<dbReference type="RefSeq" id="XP_647291.2">
    <property type="nucleotide sequence ID" value="XM_642199.2"/>
</dbReference>
<dbReference type="FunCoup" id="Q55G93">
    <property type="interactions" value="790"/>
</dbReference>
<dbReference type="STRING" id="44689.Q55G93"/>
<dbReference type="PaxDb" id="44689-DDB0266638"/>
<dbReference type="EnsemblProtists" id="EAL73711">
    <property type="protein sequence ID" value="EAL73711"/>
    <property type="gene ID" value="DDB_G0268516"/>
</dbReference>
<dbReference type="GeneID" id="8616097"/>
<dbReference type="KEGG" id="ddi:DDB_G0268516"/>
<dbReference type="dictyBase" id="DDB_G0268516">
    <property type="gene designation" value="tbcD"/>
</dbReference>
<dbReference type="VEuPathDB" id="AmoebaDB:DDB_G0268516"/>
<dbReference type="eggNOG" id="KOG1943">
    <property type="taxonomic scope" value="Eukaryota"/>
</dbReference>
<dbReference type="HOGENOM" id="CLU_003043_0_0_1"/>
<dbReference type="InParanoid" id="Q55G93"/>
<dbReference type="PhylomeDB" id="Q55G93"/>
<dbReference type="PRO" id="PR:Q55G93"/>
<dbReference type="Proteomes" id="UP000002195">
    <property type="component" value="Chromosome 1"/>
</dbReference>
<dbReference type="GO" id="GO:0048487">
    <property type="term" value="F:beta-tubulin binding"/>
    <property type="evidence" value="ECO:0000318"/>
    <property type="project" value="GO_Central"/>
</dbReference>
<dbReference type="GO" id="GO:0005096">
    <property type="term" value="F:GTPase activator activity"/>
    <property type="evidence" value="ECO:0000318"/>
    <property type="project" value="GO_Central"/>
</dbReference>
<dbReference type="GO" id="GO:0000226">
    <property type="term" value="P:microtubule cytoskeleton organization"/>
    <property type="evidence" value="ECO:0000318"/>
    <property type="project" value="GO_Central"/>
</dbReference>
<dbReference type="GO" id="GO:0007023">
    <property type="term" value="P:post-chaperonin tubulin folding pathway"/>
    <property type="evidence" value="ECO:0007669"/>
    <property type="project" value="InterPro"/>
</dbReference>
<dbReference type="GO" id="GO:0006457">
    <property type="term" value="P:protein folding"/>
    <property type="evidence" value="ECO:0000318"/>
    <property type="project" value="GO_Central"/>
</dbReference>
<dbReference type="GO" id="GO:0007021">
    <property type="term" value="P:tubulin complex assembly"/>
    <property type="evidence" value="ECO:0007669"/>
    <property type="project" value="InterPro"/>
</dbReference>
<dbReference type="Gene3D" id="1.25.10.10">
    <property type="entry name" value="Leucine-rich Repeat Variant"/>
    <property type="match status" value="2"/>
</dbReference>
<dbReference type="InterPro" id="IPR011989">
    <property type="entry name" value="ARM-like"/>
</dbReference>
<dbReference type="InterPro" id="IPR016024">
    <property type="entry name" value="ARM-type_fold"/>
</dbReference>
<dbReference type="InterPro" id="IPR021133">
    <property type="entry name" value="HEAT_type_2"/>
</dbReference>
<dbReference type="InterPro" id="IPR033162">
    <property type="entry name" value="TBCD"/>
</dbReference>
<dbReference type="InterPro" id="IPR022577">
    <property type="entry name" value="Tubulin_specific_chaperoneD_C"/>
</dbReference>
<dbReference type="PANTHER" id="PTHR12658">
    <property type="entry name" value="BETA-TUBULIN COFACTOR D"/>
    <property type="match status" value="1"/>
</dbReference>
<dbReference type="PANTHER" id="PTHR12658:SF0">
    <property type="entry name" value="TUBULIN-SPECIFIC CHAPERONE D"/>
    <property type="match status" value="1"/>
</dbReference>
<dbReference type="Pfam" id="PF12612">
    <property type="entry name" value="TFCD_C"/>
    <property type="match status" value="1"/>
</dbReference>
<dbReference type="SUPFAM" id="SSF48371">
    <property type="entry name" value="ARM repeat"/>
    <property type="match status" value="1"/>
</dbReference>
<dbReference type="PROSITE" id="PS50077">
    <property type="entry name" value="HEAT_REPEAT"/>
    <property type="match status" value="1"/>
</dbReference>
<comment type="function">
    <text evidence="1">Tubulin-folding protein; involved in the first step of the tubulin folding pathway.</text>
</comment>
<comment type="subunit">
    <text evidence="1">Supercomplex made of cofactors A to E. Cofactors A and D function by capturing and stabilizing tubulin in a quasi-native conformation. Cofactor E binds to the cofactor D-tubulin complex; interaction with cofactor C then causes the release of tubulin polypeptides that are committed to the native state (By similarity).</text>
</comment>
<comment type="similarity">
    <text evidence="3">Belongs to the TBCD family.</text>
</comment>
<organism>
    <name type="scientific">Dictyostelium discoideum</name>
    <name type="common">Social amoeba</name>
    <dbReference type="NCBI Taxonomy" id="44689"/>
    <lineage>
        <taxon>Eukaryota</taxon>
        <taxon>Amoebozoa</taxon>
        <taxon>Evosea</taxon>
        <taxon>Eumycetozoa</taxon>
        <taxon>Dictyostelia</taxon>
        <taxon>Dictyosteliales</taxon>
        <taxon>Dictyosteliaceae</taxon>
        <taxon>Dictyostelium</taxon>
    </lineage>
</organism>
<proteinExistence type="inferred from homology"/>
<protein>
    <recommendedName>
        <fullName>Tubulin-specific chaperone D</fullName>
    </recommendedName>
    <alternativeName>
        <fullName>Tubulin-folding cofactor D</fullName>
    </alternativeName>
</protein>